<proteinExistence type="evidence at protein level"/>
<gene>
    <name type="primary">pr</name>
    <name type="ORF">CG16784</name>
</gene>
<sequence>MSQQPVAFLTRRETFSACHRLHSPQLSDAENLEVFGKCNNFHGHGHNYTVEITVRGPIDRRTGMVLNITELKEAIETVIMKRLDHKNLDKDVEYFANTPSTTENLAVYIWDNIRLQLKKPELLYEVKIHETPKNIISYRGPYPLNGIYNPINKRIAHDSCTNISSDSD</sequence>
<dbReference type="EC" id="4.2.3.12"/>
<dbReference type="EMBL" id="U36232">
    <property type="protein sequence ID" value="AAC47269.1"/>
    <property type="molecule type" value="Genomic_DNA"/>
</dbReference>
<dbReference type="EMBL" id="AE014134">
    <property type="protein sequence ID" value="AAN11065.1"/>
    <property type="molecule type" value="Genomic_DNA"/>
</dbReference>
<dbReference type="EMBL" id="AY061078">
    <property type="protein sequence ID" value="AAL28626.1"/>
    <property type="molecule type" value="mRNA"/>
</dbReference>
<dbReference type="PIR" id="S68127">
    <property type="entry name" value="S68127"/>
</dbReference>
<dbReference type="RefSeq" id="NP_724244.1">
    <property type="nucleotide sequence ID" value="NM_165319.3"/>
</dbReference>
<dbReference type="SMR" id="P48611"/>
<dbReference type="BioGRID" id="61262">
    <property type="interactions" value="16"/>
</dbReference>
<dbReference type="DIP" id="DIP-22470N"/>
<dbReference type="FunCoup" id="P48611">
    <property type="interactions" value="1069"/>
</dbReference>
<dbReference type="IntAct" id="P48611">
    <property type="interactions" value="51"/>
</dbReference>
<dbReference type="STRING" id="7227.FBpp0088417"/>
<dbReference type="iPTMnet" id="P48611"/>
<dbReference type="PaxDb" id="7227-FBpp0088417"/>
<dbReference type="DNASU" id="35292"/>
<dbReference type="EnsemblMetazoa" id="FBtr0089395">
    <property type="protein sequence ID" value="FBpp0088417"/>
    <property type="gene ID" value="FBgn0003141"/>
</dbReference>
<dbReference type="GeneID" id="35292"/>
<dbReference type="KEGG" id="dme:Dmel_CG16784"/>
<dbReference type="UCSC" id="CG16784-RB">
    <property type="organism name" value="d. melanogaster"/>
</dbReference>
<dbReference type="AGR" id="FB:FBgn0003141"/>
<dbReference type="CTD" id="19066"/>
<dbReference type="FlyBase" id="FBgn0003141">
    <property type="gene designation" value="pr"/>
</dbReference>
<dbReference type="VEuPathDB" id="VectorBase:FBgn0003141"/>
<dbReference type="eggNOG" id="KOG4105">
    <property type="taxonomic scope" value="Eukaryota"/>
</dbReference>
<dbReference type="GeneTree" id="ENSGT00390000002752"/>
<dbReference type="HOGENOM" id="CLU_111016_2_0_1"/>
<dbReference type="InParanoid" id="P48611"/>
<dbReference type="OMA" id="HFNAAHK"/>
<dbReference type="OrthoDB" id="14045at2759"/>
<dbReference type="PhylomeDB" id="P48611"/>
<dbReference type="BioCyc" id="MetaCyc:MONOMER-18456"/>
<dbReference type="Reactome" id="R-DME-1474151">
    <property type="pathway name" value="Tetrahydrobiopterin (BH4) synthesis, recycling, salvage and regulation"/>
</dbReference>
<dbReference type="SignaLink" id="P48611"/>
<dbReference type="UniPathway" id="UPA00849">
    <property type="reaction ID" value="UER00819"/>
</dbReference>
<dbReference type="BioGRID-ORCS" id="35292">
    <property type="hits" value="0 hits in 1 CRISPR screen"/>
</dbReference>
<dbReference type="GenomeRNAi" id="35292"/>
<dbReference type="PRO" id="PR:P48611"/>
<dbReference type="Proteomes" id="UP000000803">
    <property type="component" value="Chromosome 2L"/>
</dbReference>
<dbReference type="Bgee" id="FBgn0003141">
    <property type="expression patterns" value="Expressed in capitellum (Drosophila) and 185 other cell types or tissues"/>
</dbReference>
<dbReference type="GO" id="GO:0005737">
    <property type="term" value="C:cytoplasm"/>
    <property type="evidence" value="ECO:0000250"/>
    <property type="project" value="FlyBase"/>
</dbReference>
<dbReference type="GO" id="GO:0005739">
    <property type="term" value="C:mitochondrion"/>
    <property type="evidence" value="ECO:0000250"/>
    <property type="project" value="FlyBase"/>
</dbReference>
<dbReference type="GO" id="GO:0003874">
    <property type="term" value="F:6-pyruvoyltetrahydropterin synthase activity"/>
    <property type="evidence" value="ECO:0007669"/>
    <property type="project" value="UniProtKB-EC"/>
</dbReference>
<dbReference type="GO" id="GO:0042802">
    <property type="term" value="F:identical protein binding"/>
    <property type="evidence" value="ECO:0000353"/>
    <property type="project" value="IntAct"/>
</dbReference>
<dbReference type="GO" id="GO:0046872">
    <property type="term" value="F:metal ion binding"/>
    <property type="evidence" value="ECO:0007669"/>
    <property type="project" value="UniProtKB-KW"/>
</dbReference>
<dbReference type="GO" id="GO:0006728">
    <property type="term" value="P:pteridine biosynthetic process"/>
    <property type="evidence" value="ECO:0000314"/>
    <property type="project" value="FlyBase"/>
</dbReference>
<dbReference type="GO" id="GO:0006729">
    <property type="term" value="P:tetrahydrobiopterin biosynthetic process"/>
    <property type="evidence" value="ECO:0007669"/>
    <property type="project" value="UniProtKB-UniPathway"/>
</dbReference>
<dbReference type="CDD" id="cd00470">
    <property type="entry name" value="PTPS"/>
    <property type="match status" value="1"/>
</dbReference>
<dbReference type="FunFam" id="3.30.479.10:FF:000003">
    <property type="entry name" value="6-pyruvoyl tetrahydrobiopterin synthase"/>
    <property type="match status" value="1"/>
</dbReference>
<dbReference type="Gene3D" id="3.30.479.10">
    <property type="entry name" value="6-pyruvoyl tetrahydropterin synthase/QueD"/>
    <property type="match status" value="1"/>
</dbReference>
<dbReference type="InterPro" id="IPR007115">
    <property type="entry name" value="6-PTP_synth/QueD"/>
</dbReference>
<dbReference type="InterPro" id="IPR038418">
    <property type="entry name" value="6-PTP_synth/QueD_sf"/>
</dbReference>
<dbReference type="InterPro" id="IPR022470">
    <property type="entry name" value="PTPS_Cys_AS"/>
</dbReference>
<dbReference type="InterPro" id="IPR022469">
    <property type="entry name" value="PTPS_His_AS"/>
</dbReference>
<dbReference type="NCBIfam" id="TIGR00039">
    <property type="entry name" value="6PTHBS"/>
    <property type="match status" value="1"/>
</dbReference>
<dbReference type="PANTHER" id="PTHR12589:SF7">
    <property type="entry name" value="6-PYRUVOYL TETRAHYDROBIOPTERIN SYNTHASE"/>
    <property type="match status" value="1"/>
</dbReference>
<dbReference type="PANTHER" id="PTHR12589">
    <property type="entry name" value="PYRUVOYL TETRAHYDROBIOPTERIN SYNTHASE"/>
    <property type="match status" value="1"/>
</dbReference>
<dbReference type="Pfam" id="PF01242">
    <property type="entry name" value="PTPS"/>
    <property type="match status" value="1"/>
</dbReference>
<dbReference type="SUPFAM" id="SSF55620">
    <property type="entry name" value="Tetrahydrobiopterin biosynthesis enzymes-like"/>
    <property type="match status" value="1"/>
</dbReference>
<dbReference type="PROSITE" id="PS00987">
    <property type="entry name" value="PTPS_1"/>
    <property type="match status" value="1"/>
</dbReference>
<dbReference type="PROSITE" id="PS00988">
    <property type="entry name" value="PTPS_2"/>
    <property type="match status" value="1"/>
</dbReference>
<keyword id="KW-0456">Lyase</keyword>
<keyword id="KW-0479">Metal-binding</keyword>
<keyword id="KW-0597">Phosphoprotein</keyword>
<keyword id="KW-1185">Reference proteome</keyword>
<keyword id="KW-0783">Tetrahydrobiopterin biosynthesis</keyword>
<keyword id="KW-0862">Zinc</keyword>
<accession>P48611</accession>
<accession>A4V0X1</accession>
<accession>Q9VIP5</accession>
<reference key="1">
    <citation type="journal article" date="1996" name="Genetics">
        <title>Structure and expression of wild-type and suppressible alleles of the Drosophila purple gene.</title>
        <authorList>
            <person name="Kim N."/>
            <person name="Kim J."/>
            <person name="Park D."/>
            <person name="Rosen C."/>
            <person name="Dorsett D."/>
            <person name="Yim J."/>
        </authorList>
    </citation>
    <scope>NUCLEOTIDE SEQUENCE [GENOMIC DNA]</scope>
    <scope>FUNCTION</scope>
    <source>
        <strain>Oregon-R</strain>
        <tissue>Head</tissue>
    </source>
</reference>
<reference key="2">
    <citation type="journal article" date="2000" name="Science">
        <title>The genome sequence of Drosophila melanogaster.</title>
        <authorList>
            <person name="Adams M.D."/>
            <person name="Celniker S.E."/>
            <person name="Holt R.A."/>
            <person name="Evans C.A."/>
            <person name="Gocayne J.D."/>
            <person name="Amanatides P.G."/>
            <person name="Scherer S.E."/>
            <person name="Li P.W."/>
            <person name="Hoskins R.A."/>
            <person name="Galle R.F."/>
            <person name="George R.A."/>
            <person name="Lewis S.E."/>
            <person name="Richards S."/>
            <person name="Ashburner M."/>
            <person name="Henderson S.N."/>
            <person name="Sutton G.G."/>
            <person name="Wortman J.R."/>
            <person name="Yandell M.D."/>
            <person name="Zhang Q."/>
            <person name="Chen L.X."/>
            <person name="Brandon R.C."/>
            <person name="Rogers Y.-H.C."/>
            <person name="Blazej R.G."/>
            <person name="Champe M."/>
            <person name="Pfeiffer B.D."/>
            <person name="Wan K.H."/>
            <person name="Doyle C."/>
            <person name="Baxter E.G."/>
            <person name="Helt G."/>
            <person name="Nelson C.R."/>
            <person name="Miklos G.L.G."/>
            <person name="Abril J.F."/>
            <person name="Agbayani A."/>
            <person name="An H.-J."/>
            <person name="Andrews-Pfannkoch C."/>
            <person name="Baldwin D."/>
            <person name="Ballew R.M."/>
            <person name="Basu A."/>
            <person name="Baxendale J."/>
            <person name="Bayraktaroglu L."/>
            <person name="Beasley E.M."/>
            <person name="Beeson K.Y."/>
            <person name="Benos P.V."/>
            <person name="Berman B.P."/>
            <person name="Bhandari D."/>
            <person name="Bolshakov S."/>
            <person name="Borkova D."/>
            <person name="Botchan M.R."/>
            <person name="Bouck J."/>
            <person name="Brokstein P."/>
            <person name="Brottier P."/>
            <person name="Burtis K.C."/>
            <person name="Busam D.A."/>
            <person name="Butler H."/>
            <person name="Cadieu E."/>
            <person name="Center A."/>
            <person name="Chandra I."/>
            <person name="Cherry J.M."/>
            <person name="Cawley S."/>
            <person name="Dahlke C."/>
            <person name="Davenport L.B."/>
            <person name="Davies P."/>
            <person name="de Pablos B."/>
            <person name="Delcher A."/>
            <person name="Deng Z."/>
            <person name="Mays A.D."/>
            <person name="Dew I."/>
            <person name="Dietz S.M."/>
            <person name="Dodson K."/>
            <person name="Doup L.E."/>
            <person name="Downes M."/>
            <person name="Dugan-Rocha S."/>
            <person name="Dunkov B.C."/>
            <person name="Dunn P."/>
            <person name="Durbin K.J."/>
            <person name="Evangelista C.C."/>
            <person name="Ferraz C."/>
            <person name="Ferriera S."/>
            <person name="Fleischmann W."/>
            <person name="Fosler C."/>
            <person name="Gabrielian A.E."/>
            <person name="Garg N.S."/>
            <person name="Gelbart W.M."/>
            <person name="Glasser K."/>
            <person name="Glodek A."/>
            <person name="Gong F."/>
            <person name="Gorrell J.H."/>
            <person name="Gu Z."/>
            <person name="Guan P."/>
            <person name="Harris M."/>
            <person name="Harris N.L."/>
            <person name="Harvey D.A."/>
            <person name="Heiman T.J."/>
            <person name="Hernandez J.R."/>
            <person name="Houck J."/>
            <person name="Hostin D."/>
            <person name="Houston K.A."/>
            <person name="Howland T.J."/>
            <person name="Wei M.-H."/>
            <person name="Ibegwam C."/>
            <person name="Jalali M."/>
            <person name="Kalush F."/>
            <person name="Karpen G.H."/>
            <person name="Ke Z."/>
            <person name="Kennison J.A."/>
            <person name="Ketchum K.A."/>
            <person name="Kimmel B.E."/>
            <person name="Kodira C.D."/>
            <person name="Kraft C.L."/>
            <person name="Kravitz S."/>
            <person name="Kulp D."/>
            <person name="Lai Z."/>
            <person name="Lasko P."/>
            <person name="Lei Y."/>
            <person name="Levitsky A.A."/>
            <person name="Li J.H."/>
            <person name="Li Z."/>
            <person name="Liang Y."/>
            <person name="Lin X."/>
            <person name="Liu X."/>
            <person name="Mattei B."/>
            <person name="McIntosh T.C."/>
            <person name="McLeod M.P."/>
            <person name="McPherson D."/>
            <person name="Merkulov G."/>
            <person name="Milshina N.V."/>
            <person name="Mobarry C."/>
            <person name="Morris J."/>
            <person name="Moshrefi A."/>
            <person name="Mount S.M."/>
            <person name="Moy M."/>
            <person name="Murphy B."/>
            <person name="Murphy L."/>
            <person name="Muzny D.M."/>
            <person name="Nelson D.L."/>
            <person name="Nelson D.R."/>
            <person name="Nelson K.A."/>
            <person name="Nixon K."/>
            <person name="Nusskern D.R."/>
            <person name="Pacleb J.M."/>
            <person name="Palazzolo M."/>
            <person name="Pittman G.S."/>
            <person name="Pan S."/>
            <person name="Pollard J."/>
            <person name="Puri V."/>
            <person name="Reese M.G."/>
            <person name="Reinert K."/>
            <person name="Remington K."/>
            <person name="Saunders R.D.C."/>
            <person name="Scheeler F."/>
            <person name="Shen H."/>
            <person name="Shue B.C."/>
            <person name="Siden-Kiamos I."/>
            <person name="Simpson M."/>
            <person name="Skupski M.P."/>
            <person name="Smith T.J."/>
            <person name="Spier E."/>
            <person name="Spradling A.C."/>
            <person name="Stapleton M."/>
            <person name="Strong R."/>
            <person name="Sun E."/>
            <person name="Svirskas R."/>
            <person name="Tector C."/>
            <person name="Turner R."/>
            <person name="Venter E."/>
            <person name="Wang A.H."/>
            <person name="Wang X."/>
            <person name="Wang Z.-Y."/>
            <person name="Wassarman D.A."/>
            <person name="Weinstock G.M."/>
            <person name="Weissenbach J."/>
            <person name="Williams S.M."/>
            <person name="Woodage T."/>
            <person name="Worley K.C."/>
            <person name="Wu D."/>
            <person name="Yang S."/>
            <person name="Yao Q.A."/>
            <person name="Ye J."/>
            <person name="Yeh R.-F."/>
            <person name="Zaveri J.S."/>
            <person name="Zhan M."/>
            <person name="Zhang G."/>
            <person name="Zhao Q."/>
            <person name="Zheng L."/>
            <person name="Zheng X.H."/>
            <person name="Zhong F.N."/>
            <person name="Zhong W."/>
            <person name="Zhou X."/>
            <person name="Zhu S.C."/>
            <person name="Zhu X."/>
            <person name="Smith H.O."/>
            <person name="Gibbs R.A."/>
            <person name="Myers E.W."/>
            <person name="Rubin G.M."/>
            <person name="Venter J.C."/>
        </authorList>
    </citation>
    <scope>NUCLEOTIDE SEQUENCE [LARGE SCALE GENOMIC DNA]</scope>
    <source>
        <strain>Berkeley</strain>
    </source>
</reference>
<reference key="3">
    <citation type="journal article" date="2002" name="Genome Biol.">
        <title>Annotation of the Drosophila melanogaster euchromatic genome: a systematic review.</title>
        <authorList>
            <person name="Misra S."/>
            <person name="Crosby M.A."/>
            <person name="Mungall C.J."/>
            <person name="Matthews B.B."/>
            <person name="Campbell K.S."/>
            <person name="Hradecky P."/>
            <person name="Huang Y."/>
            <person name="Kaminker J.S."/>
            <person name="Millburn G.H."/>
            <person name="Prochnik S.E."/>
            <person name="Smith C.D."/>
            <person name="Tupy J.L."/>
            <person name="Whitfield E.J."/>
            <person name="Bayraktaroglu L."/>
            <person name="Berman B.P."/>
            <person name="Bettencourt B.R."/>
            <person name="Celniker S.E."/>
            <person name="de Grey A.D.N.J."/>
            <person name="Drysdale R.A."/>
            <person name="Harris N.L."/>
            <person name="Richter J."/>
            <person name="Russo S."/>
            <person name="Schroeder A.J."/>
            <person name="Shu S.Q."/>
            <person name="Stapleton M."/>
            <person name="Yamada C."/>
            <person name="Ashburner M."/>
            <person name="Gelbart W.M."/>
            <person name="Rubin G.M."/>
            <person name="Lewis S.E."/>
        </authorList>
    </citation>
    <scope>GENOME REANNOTATION</scope>
    <source>
        <strain>Berkeley</strain>
    </source>
</reference>
<reference key="4">
    <citation type="journal article" date="2002" name="Genome Biol.">
        <title>A Drosophila full-length cDNA resource.</title>
        <authorList>
            <person name="Stapleton M."/>
            <person name="Carlson J.W."/>
            <person name="Brokstein P."/>
            <person name="Yu C."/>
            <person name="Champe M."/>
            <person name="George R.A."/>
            <person name="Guarin H."/>
            <person name="Kronmiller B."/>
            <person name="Pacleb J.M."/>
            <person name="Park S."/>
            <person name="Wan K.H."/>
            <person name="Rubin G.M."/>
            <person name="Celniker S.E."/>
        </authorList>
    </citation>
    <scope>NUCLEOTIDE SEQUENCE [LARGE SCALE MRNA]</scope>
    <source>
        <strain>Berkeley</strain>
        <tissue>Embryo</tissue>
    </source>
</reference>
<reference key="5">
    <citation type="journal article" date="2008" name="J. Proteome Res.">
        <title>Phosphoproteome analysis of Drosophila melanogaster embryos.</title>
        <authorList>
            <person name="Zhai B."/>
            <person name="Villen J."/>
            <person name="Beausoleil S.A."/>
            <person name="Mintseris J."/>
            <person name="Gygi S.P."/>
        </authorList>
    </citation>
    <scope>PHOSPHORYLATION [LARGE SCALE ANALYSIS] AT SER-159; THR-161; SER-164; SER-165 AND SER-167</scope>
    <scope>IDENTIFICATION BY MASS SPECTROMETRY</scope>
    <source>
        <tissue>Embryo</tissue>
    </source>
</reference>
<comment type="function">
    <text evidence="5">Required for pigment and biopterin synthesis.</text>
</comment>
<comment type="catalytic activity">
    <reaction>
        <text>7,8-dihydroneopterin 3'-triphosphate = 6-pyruvoyl-5,6,7,8-tetrahydropterin + triphosphate + H(+)</text>
        <dbReference type="Rhea" id="RHEA:22048"/>
        <dbReference type="ChEBI" id="CHEBI:15378"/>
        <dbReference type="ChEBI" id="CHEBI:18036"/>
        <dbReference type="ChEBI" id="CHEBI:58462"/>
        <dbReference type="ChEBI" id="CHEBI:136564"/>
        <dbReference type="EC" id="4.2.3.12"/>
    </reaction>
</comment>
<comment type="cofactor">
    <cofactor evidence="1">
        <name>Zn(2+)</name>
        <dbReference type="ChEBI" id="CHEBI:29105"/>
    </cofactor>
    <text evidence="1">Binds 1 zinc ion per subunit.</text>
</comment>
<comment type="pathway">
    <text>Cofactor biosynthesis; tetrahydrobiopterin biosynthesis; tetrahydrobiopterin from 7,8-dihydroneopterin triphosphate: step 1/3.</text>
</comment>
<comment type="subunit">
    <text evidence="1">Homohexamer formed of two homotrimers in a head to head fashion.</text>
</comment>
<comment type="interaction">
    <interactant intactId="EBI-128080">
        <id>P48611</id>
    </interactant>
    <interactant intactId="EBI-128080">
        <id>P48611</id>
        <label>pr</label>
    </interactant>
    <organismsDiffer>false</organismsDiffer>
    <experiments>3</experiments>
</comment>
<comment type="miscellaneous">
    <text>The active site is at the interface between 2 subunits. The proton acceptor Cys is on one subunit, and the charge relay system is on the other subunit.</text>
</comment>
<comment type="similarity">
    <text evidence="6">Belongs to the PTPS family.</text>
</comment>
<protein>
    <recommendedName>
        <fullName>6-pyruvoyl tetrahydrobiopterin synthase</fullName>
        <shortName>PTP synthase</shortName>
        <shortName>PTPS</shortName>
        <ecNumber>4.2.3.12</ecNumber>
    </recommendedName>
    <alternativeName>
        <fullName>Protein purple</fullName>
    </alternativeName>
    <alternativeName>
        <fullName>Sepiapterin synthase A</fullName>
    </alternativeName>
</protein>
<organism>
    <name type="scientific">Drosophila melanogaster</name>
    <name type="common">Fruit fly</name>
    <dbReference type="NCBI Taxonomy" id="7227"/>
    <lineage>
        <taxon>Eukaryota</taxon>
        <taxon>Metazoa</taxon>
        <taxon>Ecdysozoa</taxon>
        <taxon>Arthropoda</taxon>
        <taxon>Hexapoda</taxon>
        <taxon>Insecta</taxon>
        <taxon>Pterygota</taxon>
        <taxon>Neoptera</taxon>
        <taxon>Endopterygota</taxon>
        <taxon>Diptera</taxon>
        <taxon>Brachycera</taxon>
        <taxon>Muscomorpha</taxon>
        <taxon>Ephydroidea</taxon>
        <taxon>Drosophilidae</taxon>
        <taxon>Drosophila</taxon>
        <taxon>Sophophora</taxon>
    </lineage>
</organism>
<evidence type="ECO:0000250" key="1"/>
<evidence type="ECO:0000255" key="2">
    <source>
        <dbReference type="PROSITE-ProRule" id="PRU10123"/>
    </source>
</evidence>
<evidence type="ECO:0000255" key="3">
    <source>
        <dbReference type="PROSITE-ProRule" id="PRU10124"/>
    </source>
</evidence>
<evidence type="ECO:0000269" key="4">
    <source>
    </source>
</evidence>
<evidence type="ECO:0000269" key="5">
    <source>
    </source>
</evidence>
<evidence type="ECO:0000305" key="6"/>
<feature type="chain" id="PRO_0000057918" description="6-pyruvoyl tetrahydrobiopterin synthase">
    <location>
        <begin position="1"/>
        <end position="168"/>
    </location>
</feature>
<feature type="active site" description="Proton acceptor" evidence="2">
    <location>
        <position position="38"/>
    </location>
</feature>
<feature type="active site" description="Charge relay system" evidence="3">
    <location>
        <position position="85"/>
    </location>
</feature>
<feature type="active site" description="Charge relay system" evidence="3">
    <location>
        <position position="130"/>
    </location>
</feature>
<feature type="binding site" evidence="2">
    <location>
        <position position="19"/>
    </location>
    <ligand>
        <name>Zn(2+)</name>
        <dbReference type="ChEBI" id="CHEBI:29105"/>
    </ligand>
</feature>
<feature type="binding site" evidence="2">
    <location>
        <position position="44"/>
    </location>
    <ligand>
        <name>Zn(2+)</name>
        <dbReference type="ChEBI" id="CHEBI:29105"/>
    </ligand>
</feature>
<feature type="binding site" evidence="2">
    <location>
        <position position="46"/>
    </location>
    <ligand>
        <name>Zn(2+)</name>
        <dbReference type="ChEBI" id="CHEBI:29105"/>
    </ligand>
</feature>
<feature type="modified residue" description="Phosphoserine" evidence="4">
    <location>
        <position position="159"/>
    </location>
</feature>
<feature type="modified residue" description="Phosphothreonine" evidence="4">
    <location>
        <position position="161"/>
    </location>
</feature>
<feature type="modified residue" description="Phosphoserine" evidence="4">
    <location>
        <position position="164"/>
    </location>
</feature>
<feature type="modified residue" description="Phosphoserine" evidence="4">
    <location>
        <position position="165"/>
    </location>
</feature>
<feature type="modified residue" description="Phosphoserine" evidence="4">
    <location>
        <position position="167"/>
    </location>
</feature>
<name>PTPS_DROME</name>